<reference key="1">
    <citation type="journal article" date="2004" name="Plant Physiol.">
        <title>A comparison of rice chloroplast genomes.</title>
        <authorList>
            <person name="Tang J."/>
            <person name="Xia H."/>
            <person name="Cao M."/>
            <person name="Zhang X."/>
            <person name="Zeng W."/>
            <person name="Hu S."/>
            <person name="Tong W."/>
            <person name="Wang J."/>
            <person name="Wang J."/>
            <person name="Yu J."/>
            <person name="Yang H."/>
            <person name="Zhu L."/>
        </authorList>
    </citation>
    <scope>NUCLEOTIDE SEQUENCE [LARGE SCALE GENOMIC DNA]</scope>
    <source>
        <strain>cv. 93-11</strain>
    </source>
</reference>
<name>NDHK_ORYSI</name>
<gene>
    <name evidence="1" type="primary">ndhK</name>
    <name type="ORF">9311057</name>
</gene>
<geneLocation type="chloroplast"/>
<feature type="chain" id="PRO_0000288706" description="NAD(P)H-quinone oxidoreductase subunit K, chloroplastic">
    <location>
        <begin position="1"/>
        <end position="225"/>
    </location>
</feature>
<feature type="binding site" evidence="1">
    <location>
        <position position="43"/>
    </location>
    <ligand>
        <name>[4Fe-4S] cluster</name>
        <dbReference type="ChEBI" id="CHEBI:49883"/>
    </ligand>
</feature>
<feature type="binding site" evidence="1">
    <location>
        <position position="44"/>
    </location>
    <ligand>
        <name>[4Fe-4S] cluster</name>
        <dbReference type="ChEBI" id="CHEBI:49883"/>
    </ligand>
</feature>
<feature type="binding site" evidence="1">
    <location>
        <position position="108"/>
    </location>
    <ligand>
        <name>[4Fe-4S] cluster</name>
        <dbReference type="ChEBI" id="CHEBI:49883"/>
    </ligand>
</feature>
<feature type="binding site" evidence="1">
    <location>
        <position position="139"/>
    </location>
    <ligand>
        <name>[4Fe-4S] cluster</name>
        <dbReference type="ChEBI" id="CHEBI:49883"/>
    </ligand>
</feature>
<comment type="function">
    <text evidence="1">NDH shuttles electrons from NAD(P)H:plastoquinone, via FMN and iron-sulfur (Fe-S) centers, to quinones in the photosynthetic chain and possibly in a chloroplast respiratory chain. The immediate electron acceptor for the enzyme in this species is believed to be plastoquinone. Couples the redox reaction to proton translocation, and thus conserves the redox energy in a proton gradient.</text>
</comment>
<comment type="catalytic activity">
    <reaction evidence="1">
        <text>a plastoquinone + NADH + (n+1) H(+)(in) = a plastoquinol + NAD(+) + n H(+)(out)</text>
        <dbReference type="Rhea" id="RHEA:42608"/>
        <dbReference type="Rhea" id="RHEA-COMP:9561"/>
        <dbReference type="Rhea" id="RHEA-COMP:9562"/>
        <dbReference type="ChEBI" id="CHEBI:15378"/>
        <dbReference type="ChEBI" id="CHEBI:17757"/>
        <dbReference type="ChEBI" id="CHEBI:57540"/>
        <dbReference type="ChEBI" id="CHEBI:57945"/>
        <dbReference type="ChEBI" id="CHEBI:62192"/>
    </reaction>
</comment>
<comment type="catalytic activity">
    <reaction evidence="1">
        <text>a plastoquinone + NADPH + (n+1) H(+)(in) = a plastoquinol + NADP(+) + n H(+)(out)</text>
        <dbReference type="Rhea" id="RHEA:42612"/>
        <dbReference type="Rhea" id="RHEA-COMP:9561"/>
        <dbReference type="Rhea" id="RHEA-COMP:9562"/>
        <dbReference type="ChEBI" id="CHEBI:15378"/>
        <dbReference type="ChEBI" id="CHEBI:17757"/>
        <dbReference type="ChEBI" id="CHEBI:57783"/>
        <dbReference type="ChEBI" id="CHEBI:58349"/>
        <dbReference type="ChEBI" id="CHEBI:62192"/>
    </reaction>
</comment>
<comment type="cofactor">
    <cofactor evidence="1">
        <name>[4Fe-4S] cluster</name>
        <dbReference type="ChEBI" id="CHEBI:49883"/>
    </cofactor>
    <text evidence="1">Binds 1 [4Fe-4S] cluster.</text>
</comment>
<comment type="subunit">
    <text evidence="1">NDH is composed of at least 16 different subunits, 5 of which are encoded in the nucleus.</text>
</comment>
<comment type="subcellular location">
    <subcellularLocation>
        <location evidence="1">Plastid</location>
        <location evidence="1">Chloroplast thylakoid membrane</location>
        <topology evidence="1">Peripheral membrane protein</topology>
        <orientation evidence="1">Stromal side</orientation>
    </subcellularLocation>
</comment>
<comment type="similarity">
    <text evidence="1">Belongs to the complex I 20 kDa subunit family.</text>
</comment>
<comment type="sequence caution" evidence="2">
    <conflict type="erroneous initiation">
        <sequence resource="EMBL-CDS" id="AAS46058"/>
    </conflict>
</comment>
<dbReference type="EC" id="7.1.1.-" evidence="1"/>
<dbReference type="EMBL" id="AY522329">
    <property type="protein sequence ID" value="AAS46058.1"/>
    <property type="status" value="ALT_INIT"/>
    <property type="molecule type" value="Genomic_DNA"/>
</dbReference>
<dbReference type="RefSeq" id="YP_654218.2">
    <property type="nucleotide sequence ID" value="NC_008155.1"/>
</dbReference>
<dbReference type="SMR" id="P0C342"/>
<dbReference type="STRING" id="39946.P0C342"/>
<dbReference type="GeneID" id="4126868"/>
<dbReference type="Proteomes" id="UP000007015">
    <property type="component" value="Chloroplast"/>
</dbReference>
<dbReference type="GO" id="GO:0009535">
    <property type="term" value="C:chloroplast thylakoid membrane"/>
    <property type="evidence" value="ECO:0007669"/>
    <property type="project" value="UniProtKB-SubCell"/>
</dbReference>
<dbReference type="GO" id="GO:0009536">
    <property type="term" value="C:plastid"/>
    <property type="evidence" value="ECO:0000305"/>
    <property type="project" value="Gramene"/>
</dbReference>
<dbReference type="GO" id="GO:0045271">
    <property type="term" value="C:respiratory chain complex I"/>
    <property type="evidence" value="ECO:0007669"/>
    <property type="project" value="TreeGrafter"/>
</dbReference>
<dbReference type="GO" id="GO:0051539">
    <property type="term" value="F:4 iron, 4 sulfur cluster binding"/>
    <property type="evidence" value="ECO:0007669"/>
    <property type="project" value="UniProtKB-KW"/>
</dbReference>
<dbReference type="GO" id="GO:0005506">
    <property type="term" value="F:iron ion binding"/>
    <property type="evidence" value="ECO:0007669"/>
    <property type="project" value="UniProtKB-UniRule"/>
</dbReference>
<dbReference type="GO" id="GO:0008137">
    <property type="term" value="F:NADH dehydrogenase (ubiquinone) activity"/>
    <property type="evidence" value="ECO:0007669"/>
    <property type="project" value="InterPro"/>
</dbReference>
<dbReference type="GO" id="GO:0048038">
    <property type="term" value="F:quinone binding"/>
    <property type="evidence" value="ECO:0007669"/>
    <property type="project" value="UniProtKB-KW"/>
</dbReference>
<dbReference type="GO" id="GO:0009060">
    <property type="term" value="P:aerobic respiration"/>
    <property type="evidence" value="ECO:0007669"/>
    <property type="project" value="TreeGrafter"/>
</dbReference>
<dbReference type="GO" id="GO:0015990">
    <property type="term" value="P:electron transport coupled proton transport"/>
    <property type="evidence" value="ECO:0007669"/>
    <property type="project" value="TreeGrafter"/>
</dbReference>
<dbReference type="GO" id="GO:0019684">
    <property type="term" value="P:photosynthesis, light reaction"/>
    <property type="evidence" value="ECO:0007669"/>
    <property type="project" value="UniProtKB-UniRule"/>
</dbReference>
<dbReference type="FunFam" id="3.40.50.12280:FF:000003">
    <property type="entry name" value="NAD(P)H-quinone oxidoreductase subunit K, chloroplastic"/>
    <property type="match status" value="1"/>
</dbReference>
<dbReference type="Gene3D" id="3.40.50.12280">
    <property type="match status" value="1"/>
</dbReference>
<dbReference type="HAMAP" id="MF_01356">
    <property type="entry name" value="NDH1_NuoB"/>
    <property type="match status" value="1"/>
</dbReference>
<dbReference type="InterPro" id="IPR006137">
    <property type="entry name" value="NADH_UbQ_OxRdtase-like_20kDa"/>
</dbReference>
<dbReference type="InterPro" id="IPR006138">
    <property type="entry name" value="NADH_UQ_OxRdtase_20Kd_su"/>
</dbReference>
<dbReference type="NCBIfam" id="TIGR01957">
    <property type="entry name" value="nuoB_fam"/>
    <property type="match status" value="1"/>
</dbReference>
<dbReference type="NCBIfam" id="NF005012">
    <property type="entry name" value="PRK06411.1"/>
    <property type="match status" value="1"/>
</dbReference>
<dbReference type="PANTHER" id="PTHR11995">
    <property type="entry name" value="NADH DEHYDROGENASE"/>
    <property type="match status" value="1"/>
</dbReference>
<dbReference type="PANTHER" id="PTHR11995:SF14">
    <property type="entry name" value="NADH DEHYDROGENASE [UBIQUINONE] IRON-SULFUR PROTEIN 7, MITOCHONDRIAL"/>
    <property type="match status" value="1"/>
</dbReference>
<dbReference type="Pfam" id="PF01058">
    <property type="entry name" value="Oxidored_q6"/>
    <property type="match status" value="1"/>
</dbReference>
<dbReference type="SUPFAM" id="SSF56770">
    <property type="entry name" value="HydA/Nqo6-like"/>
    <property type="match status" value="1"/>
</dbReference>
<dbReference type="PROSITE" id="PS01150">
    <property type="entry name" value="COMPLEX1_20K"/>
    <property type="match status" value="1"/>
</dbReference>
<protein>
    <recommendedName>
        <fullName evidence="1">NAD(P)H-quinone oxidoreductase subunit K, chloroplastic</fullName>
        <ecNumber evidence="1">7.1.1.-</ecNumber>
    </recommendedName>
    <alternativeName>
        <fullName evidence="1">NAD(P)H dehydrogenase subunit K</fullName>
    </alternativeName>
    <alternativeName>
        <fullName evidence="1">NADH-plastoquinone oxidoreductase subunit K</fullName>
    </alternativeName>
</protein>
<sequence>MSLIEFPLLDQTSSNSVISTTLKDLSNWSRLSSLWPLLYGTSCCFIEFASLIGSRFDFDRYGLVPRSSPRQADLILTAGTVTMKMAPSLVRLYEQMPEPKYVIAMGACTITGGMFSTDSYSTVRGVDKLIPVDVYLPGCPPKPEAVIDALTKLRKKISREIVEDRTLSQKKNRCFTTSHKLYVRRSTNTGTYEQELLYQSPSTLDISSETFFKSKSPVSSYKLVN</sequence>
<organism>
    <name type="scientific">Oryza sativa subsp. indica</name>
    <name type="common">Rice</name>
    <dbReference type="NCBI Taxonomy" id="39946"/>
    <lineage>
        <taxon>Eukaryota</taxon>
        <taxon>Viridiplantae</taxon>
        <taxon>Streptophyta</taxon>
        <taxon>Embryophyta</taxon>
        <taxon>Tracheophyta</taxon>
        <taxon>Spermatophyta</taxon>
        <taxon>Magnoliopsida</taxon>
        <taxon>Liliopsida</taxon>
        <taxon>Poales</taxon>
        <taxon>Poaceae</taxon>
        <taxon>BOP clade</taxon>
        <taxon>Oryzoideae</taxon>
        <taxon>Oryzeae</taxon>
        <taxon>Oryzinae</taxon>
        <taxon>Oryza</taxon>
        <taxon>Oryza sativa</taxon>
    </lineage>
</organism>
<evidence type="ECO:0000255" key="1">
    <source>
        <dbReference type="HAMAP-Rule" id="MF_01356"/>
    </source>
</evidence>
<evidence type="ECO:0000305" key="2"/>
<proteinExistence type="inferred from homology"/>
<accession>P0C342</accession>
<accession>P12159</accession>
<accession>Q6QY07</accession>
<accession>Q6QY71</accession>
<keyword id="KW-0004">4Fe-4S</keyword>
<keyword id="KW-0150">Chloroplast</keyword>
<keyword id="KW-0408">Iron</keyword>
<keyword id="KW-0411">Iron-sulfur</keyword>
<keyword id="KW-0472">Membrane</keyword>
<keyword id="KW-0479">Metal-binding</keyword>
<keyword id="KW-0520">NAD</keyword>
<keyword id="KW-0521">NADP</keyword>
<keyword id="KW-0934">Plastid</keyword>
<keyword id="KW-0618">Plastoquinone</keyword>
<keyword id="KW-0874">Quinone</keyword>
<keyword id="KW-1185">Reference proteome</keyword>
<keyword id="KW-0793">Thylakoid</keyword>
<keyword id="KW-1278">Translocase</keyword>
<keyword id="KW-0813">Transport</keyword>